<keyword id="KW-0963">Cytoplasm</keyword>
<keyword id="KW-0539">Nucleus</keyword>
<keyword id="KW-1185">Reference proteome</keyword>
<name>YFQ5_SCHPO</name>
<protein>
    <recommendedName>
        <fullName>Uncharacterized protein C8E11.05c</fullName>
    </recommendedName>
</protein>
<feature type="chain" id="PRO_0000372362" description="Uncharacterized protein C8E11.05c">
    <location>
        <begin position="1"/>
        <end position="338"/>
    </location>
</feature>
<feature type="region of interest" description="Disordered" evidence="1">
    <location>
        <begin position="1"/>
        <end position="72"/>
    </location>
</feature>
<feature type="compositionally biased region" description="Polar residues" evidence="1">
    <location>
        <begin position="24"/>
        <end position="38"/>
    </location>
</feature>
<feature type="compositionally biased region" description="Basic and acidic residues" evidence="1">
    <location>
        <begin position="49"/>
        <end position="58"/>
    </location>
</feature>
<feature type="compositionally biased region" description="Acidic residues" evidence="1">
    <location>
        <begin position="59"/>
        <end position="68"/>
    </location>
</feature>
<dbReference type="EMBL" id="CU329670">
    <property type="protein sequence ID" value="CAA17026.1"/>
    <property type="molecule type" value="Genomic_DNA"/>
</dbReference>
<dbReference type="PIR" id="T39159">
    <property type="entry name" value="T39159"/>
</dbReference>
<dbReference type="RefSeq" id="NP_594164.1">
    <property type="nucleotide sequence ID" value="NM_001019588.2"/>
</dbReference>
<dbReference type="SMR" id="O42882"/>
<dbReference type="BioGRID" id="279108">
    <property type="interactions" value="5"/>
</dbReference>
<dbReference type="STRING" id="284812.O42882"/>
<dbReference type="iPTMnet" id="O42882"/>
<dbReference type="PaxDb" id="4896-SPAC8E11.05c.1"/>
<dbReference type="EnsemblFungi" id="SPAC8E11.05c.1">
    <property type="protein sequence ID" value="SPAC8E11.05c.1:pep"/>
    <property type="gene ID" value="SPAC8E11.05c"/>
</dbReference>
<dbReference type="KEGG" id="spo:2542654"/>
<dbReference type="PomBase" id="SPAC8E11.05c"/>
<dbReference type="VEuPathDB" id="FungiDB:SPAC8E11.05c"/>
<dbReference type="eggNOG" id="ENOG502RZVD">
    <property type="taxonomic scope" value="Eukaryota"/>
</dbReference>
<dbReference type="HOGENOM" id="CLU_839799_0_0_1"/>
<dbReference type="InParanoid" id="O42882"/>
<dbReference type="PRO" id="PR:O42882"/>
<dbReference type="Proteomes" id="UP000002485">
    <property type="component" value="Chromosome I"/>
</dbReference>
<dbReference type="GO" id="GO:0005829">
    <property type="term" value="C:cytosol"/>
    <property type="evidence" value="ECO:0007005"/>
    <property type="project" value="PomBase"/>
</dbReference>
<dbReference type="GO" id="GO:0005634">
    <property type="term" value="C:nucleus"/>
    <property type="evidence" value="ECO:0007005"/>
    <property type="project" value="PomBase"/>
</dbReference>
<dbReference type="InterPro" id="IPR031355">
    <property type="entry name" value="YBL010C/LAA2-like"/>
</dbReference>
<dbReference type="PANTHER" id="PTHR38698">
    <property type="entry name" value="EXPRESSED PROTEIN"/>
    <property type="match status" value="1"/>
</dbReference>
<dbReference type="PANTHER" id="PTHR38698:SF1">
    <property type="entry name" value="FUNGAL PROTEIN"/>
    <property type="match status" value="1"/>
</dbReference>
<dbReference type="Pfam" id="PF17104">
    <property type="entry name" value="YBL010C_LAA2"/>
    <property type="match status" value="2"/>
</dbReference>
<reference key="1">
    <citation type="journal article" date="2002" name="Nature">
        <title>The genome sequence of Schizosaccharomyces pombe.</title>
        <authorList>
            <person name="Wood V."/>
            <person name="Gwilliam R."/>
            <person name="Rajandream M.A."/>
            <person name="Lyne M.H."/>
            <person name="Lyne R."/>
            <person name="Stewart A."/>
            <person name="Sgouros J.G."/>
            <person name="Peat N."/>
            <person name="Hayles J."/>
            <person name="Baker S.G."/>
            <person name="Basham D."/>
            <person name="Bowman S."/>
            <person name="Brooks K."/>
            <person name="Brown D."/>
            <person name="Brown S."/>
            <person name="Chillingworth T."/>
            <person name="Churcher C.M."/>
            <person name="Collins M."/>
            <person name="Connor R."/>
            <person name="Cronin A."/>
            <person name="Davis P."/>
            <person name="Feltwell T."/>
            <person name="Fraser A."/>
            <person name="Gentles S."/>
            <person name="Goble A."/>
            <person name="Hamlin N."/>
            <person name="Harris D.E."/>
            <person name="Hidalgo J."/>
            <person name="Hodgson G."/>
            <person name="Holroyd S."/>
            <person name="Hornsby T."/>
            <person name="Howarth S."/>
            <person name="Huckle E.J."/>
            <person name="Hunt S."/>
            <person name="Jagels K."/>
            <person name="James K.D."/>
            <person name="Jones L."/>
            <person name="Jones M."/>
            <person name="Leather S."/>
            <person name="McDonald S."/>
            <person name="McLean J."/>
            <person name="Mooney P."/>
            <person name="Moule S."/>
            <person name="Mungall K.L."/>
            <person name="Murphy L.D."/>
            <person name="Niblett D."/>
            <person name="Odell C."/>
            <person name="Oliver K."/>
            <person name="O'Neil S."/>
            <person name="Pearson D."/>
            <person name="Quail M.A."/>
            <person name="Rabbinowitsch E."/>
            <person name="Rutherford K.M."/>
            <person name="Rutter S."/>
            <person name="Saunders D."/>
            <person name="Seeger K."/>
            <person name="Sharp S."/>
            <person name="Skelton J."/>
            <person name="Simmonds M.N."/>
            <person name="Squares R."/>
            <person name="Squares S."/>
            <person name="Stevens K."/>
            <person name="Taylor K."/>
            <person name="Taylor R.G."/>
            <person name="Tivey A."/>
            <person name="Walsh S.V."/>
            <person name="Warren T."/>
            <person name="Whitehead S."/>
            <person name="Woodward J.R."/>
            <person name="Volckaert G."/>
            <person name="Aert R."/>
            <person name="Robben J."/>
            <person name="Grymonprez B."/>
            <person name="Weltjens I."/>
            <person name="Vanstreels E."/>
            <person name="Rieger M."/>
            <person name="Schaefer M."/>
            <person name="Mueller-Auer S."/>
            <person name="Gabel C."/>
            <person name="Fuchs M."/>
            <person name="Duesterhoeft A."/>
            <person name="Fritzc C."/>
            <person name="Holzer E."/>
            <person name="Moestl D."/>
            <person name="Hilbert H."/>
            <person name="Borzym K."/>
            <person name="Langer I."/>
            <person name="Beck A."/>
            <person name="Lehrach H."/>
            <person name="Reinhardt R."/>
            <person name="Pohl T.M."/>
            <person name="Eger P."/>
            <person name="Zimmermann W."/>
            <person name="Wedler H."/>
            <person name="Wambutt R."/>
            <person name="Purnelle B."/>
            <person name="Goffeau A."/>
            <person name="Cadieu E."/>
            <person name="Dreano S."/>
            <person name="Gloux S."/>
            <person name="Lelaure V."/>
            <person name="Mottier S."/>
            <person name="Galibert F."/>
            <person name="Aves S.J."/>
            <person name="Xiang Z."/>
            <person name="Hunt C."/>
            <person name="Moore K."/>
            <person name="Hurst S.M."/>
            <person name="Lucas M."/>
            <person name="Rochet M."/>
            <person name="Gaillardin C."/>
            <person name="Tallada V.A."/>
            <person name="Garzon A."/>
            <person name="Thode G."/>
            <person name="Daga R.R."/>
            <person name="Cruzado L."/>
            <person name="Jimenez J."/>
            <person name="Sanchez M."/>
            <person name="del Rey F."/>
            <person name="Benito J."/>
            <person name="Dominguez A."/>
            <person name="Revuelta J.L."/>
            <person name="Moreno S."/>
            <person name="Armstrong J."/>
            <person name="Forsburg S.L."/>
            <person name="Cerutti L."/>
            <person name="Lowe T."/>
            <person name="McCombie W.R."/>
            <person name="Paulsen I."/>
            <person name="Potashkin J."/>
            <person name="Shpakovski G.V."/>
            <person name="Ussery D."/>
            <person name="Barrell B.G."/>
            <person name="Nurse P."/>
        </authorList>
    </citation>
    <scope>NUCLEOTIDE SEQUENCE [LARGE SCALE GENOMIC DNA]</scope>
    <source>
        <strain>972 / ATCC 24843</strain>
    </source>
</reference>
<reference key="2">
    <citation type="journal article" date="2006" name="Nat. Biotechnol.">
        <title>ORFeome cloning and global analysis of protein localization in the fission yeast Schizosaccharomyces pombe.</title>
        <authorList>
            <person name="Matsuyama A."/>
            <person name="Arai R."/>
            <person name="Yashiroda Y."/>
            <person name="Shirai A."/>
            <person name="Kamata A."/>
            <person name="Sekido S."/>
            <person name="Kobayashi Y."/>
            <person name="Hashimoto A."/>
            <person name="Hamamoto M."/>
            <person name="Hiraoka Y."/>
            <person name="Horinouchi S."/>
            <person name="Yoshida M."/>
        </authorList>
    </citation>
    <scope>SUBCELLULAR LOCATION [LARGE SCALE ANALYSIS]</scope>
</reference>
<gene>
    <name type="ORF">SPAC8E11.05c</name>
</gene>
<proteinExistence type="predicted"/>
<evidence type="ECO:0000256" key="1">
    <source>
        <dbReference type="SAM" id="MobiDB-lite"/>
    </source>
</evidence>
<evidence type="ECO:0000269" key="2">
    <source>
    </source>
</evidence>
<accession>O42882</accession>
<organism>
    <name type="scientific">Schizosaccharomyces pombe (strain 972 / ATCC 24843)</name>
    <name type="common">Fission yeast</name>
    <dbReference type="NCBI Taxonomy" id="284812"/>
    <lineage>
        <taxon>Eukaryota</taxon>
        <taxon>Fungi</taxon>
        <taxon>Dikarya</taxon>
        <taxon>Ascomycota</taxon>
        <taxon>Taphrinomycotina</taxon>
        <taxon>Schizosaccharomycetes</taxon>
        <taxon>Schizosaccharomycetales</taxon>
        <taxon>Schizosaccharomycetaceae</taxon>
        <taxon>Schizosaccharomyces</taxon>
    </lineage>
</organism>
<comment type="subcellular location">
    <subcellularLocation>
        <location evidence="2">Cytoplasm</location>
    </subcellularLocation>
    <subcellularLocation>
        <location evidence="2">Nucleus</location>
    </subcellularLocation>
</comment>
<sequence>MASPPILSRESPVLGLEEEKKSDGGNSEVNIDPSASSSLKEDVDGEEGADTKIDPHLLEEDDLNPVEDYDSKNQKVVEASKLDLDATSTVWAESLSINREASISQSGIVDNEMEKKVEEEEEFDEFDDFGEFEHDIPICTFMGDWQDDFQDAVNSVFGLPETPKTIEESSLDPDRILSLWQKLIEMPVLQRPDWLRSSIRHIFLVTMGLPVDLDELLPTPSTQGSFNSSRTIELSSVTLPKSEDEPYLDYSAARRLCSINKDALTHRSHESLQQHIELLESTLQQAVEVARYWTDKRDSALSDKLLYETVVDDLVQHSKRLRNSGRKFLSRRSTSSHK</sequence>